<evidence type="ECO:0000255" key="1">
    <source>
        <dbReference type="HAMAP-Rule" id="MF_00402"/>
    </source>
</evidence>
<evidence type="ECO:0000305" key="2"/>
<accession>Q1BAK5</accession>
<organism>
    <name type="scientific">Mycobacterium sp. (strain MCS)</name>
    <dbReference type="NCBI Taxonomy" id="164756"/>
    <lineage>
        <taxon>Bacteria</taxon>
        <taxon>Bacillati</taxon>
        <taxon>Actinomycetota</taxon>
        <taxon>Actinomycetes</taxon>
        <taxon>Mycobacteriales</taxon>
        <taxon>Mycobacteriaceae</taxon>
        <taxon>Mycobacterium</taxon>
    </lineage>
</organism>
<name>RL19_MYCSS</name>
<feature type="chain" id="PRO_1000049703" description="Large ribosomal subunit protein bL19">
    <location>
        <begin position="1"/>
        <end position="113"/>
    </location>
</feature>
<sequence length="113" mass="12879">MNTLDFVDQSSLRDDIPAFGPGDTVNVHVKVIEGSKERIQVFKGVVIRRQGGGIRETFTVRKESYGVGVERTFPVHSPNIDHIDVVTRGDVRRAKLYYLRELRGKKAKIKEKR</sequence>
<proteinExistence type="inferred from homology"/>
<keyword id="KW-0687">Ribonucleoprotein</keyword>
<keyword id="KW-0689">Ribosomal protein</keyword>
<reference key="1">
    <citation type="submission" date="2006-06" db="EMBL/GenBank/DDBJ databases">
        <title>Complete sequence of chromosome of Mycobacterium sp. MCS.</title>
        <authorList>
            <consortium name="US DOE Joint Genome Institute"/>
            <person name="Copeland A."/>
            <person name="Lucas S."/>
            <person name="Lapidus A."/>
            <person name="Barry K."/>
            <person name="Detter J.C."/>
            <person name="Glavina del Rio T."/>
            <person name="Hammon N."/>
            <person name="Israni S."/>
            <person name="Dalin E."/>
            <person name="Tice H."/>
            <person name="Pitluck S."/>
            <person name="Martinez M."/>
            <person name="Schmutz J."/>
            <person name="Larimer F."/>
            <person name="Land M."/>
            <person name="Hauser L."/>
            <person name="Kyrpides N."/>
            <person name="Kim E."/>
            <person name="Miller C.D."/>
            <person name="Hughes J.E."/>
            <person name="Anderson A.J."/>
            <person name="Sims R.C."/>
            <person name="Richardson P."/>
        </authorList>
    </citation>
    <scope>NUCLEOTIDE SEQUENCE [LARGE SCALE GENOMIC DNA]</scope>
    <source>
        <strain>MCS</strain>
    </source>
</reference>
<protein>
    <recommendedName>
        <fullName evidence="1">Large ribosomal subunit protein bL19</fullName>
    </recommendedName>
    <alternativeName>
        <fullName evidence="2">50S ribosomal protein L19</fullName>
    </alternativeName>
</protein>
<dbReference type="EMBL" id="CP000384">
    <property type="protein sequence ID" value="ABG08079.1"/>
    <property type="molecule type" value="Genomic_DNA"/>
</dbReference>
<dbReference type="SMR" id="Q1BAK5"/>
<dbReference type="KEGG" id="mmc:Mmcs_1970"/>
<dbReference type="HOGENOM" id="CLU_103507_2_1_11"/>
<dbReference type="BioCyc" id="MSP164756:G1G6O-2015-MONOMER"/>
<dbReference type="GO" id="GO:0022625">
    <property type="term" value="C:cytosolic large ribosomal subunit"/>
    <property type="evidence" value="ECO:0007669"/>
    <property type="project" value="TreeGrafter"/>
</dbReference>
<dbReference type="GO" id="GO:0003735">
    <property type="term" value="F:structural constituent of ribosome"/>
    <property type="evidence" value="ECO:0007669"/>
    <property type="project" value="InterPro"/>
</dbReference>
<dbReference type="GO" id="GO:0006412">
    <property type="term" value="P:translation"/>
    <property type="evidence" value="ECO:0007669"/>
    <property type="project" value="UniProtKB-UniRule"/>
</dbReference>
<dbReference type="FunFam" id="2.30.30.790:FF:000001">
    <property type="entry name" value="50S ribosomal protein L19"/>
    <property type="match status" value="1"/>
</dbReference>
<dbReference type="Gene3D" id="2.30.30.790">
    <property type="match status" value="1"/>
</dbReference>
<dbReference type="HAMAP" id="MF_00402">
    <property type="entry name" value="Ribosomal_bL19"/>
    <property type="match status" value="1"/>
</dbReference>
<dbReference type="InterPro" id="IPR001857">
    <property type="entry name" value="Ribosomal_bL19"/>
</dbReference>
<dbReference type="InterPro" id="IPR018257">
    <property type="entry name" value="Ribosomal_bL19_CS"/>
</dbReference>
<dbReference type="InterPro" id="IPR038657">
    <property type="entry name" value="Ribosomal_bL19_sf"/>
</dbReference>
<dbReference type="InterPro" id="IPR008991">
    <property type="entry name" value="Translation_prot_SH3-like_sf"/>
</dbReference>
<dbReference type="NCBIfam" id="TIGR01024">
    <property type="entry name" value="rplS_bact"/>
    <property type="match status" value="1"/>
</dbReference>
<dbReference type="PANTHER" id="PTHR15680:SF9">
    <property type="entry name" value="LARGE RIBOSOMAL SUBUNIT PROTEIN BL19M"/>
    <property type="match status" value="1"/>
</dbReference>
<dbReference type="PANTHER" id="PTHR15680">
    <property type="entry name" value="RIBOSOMAL PROTEIN L19"/>
    <property type="match status" value="1"/>
</dbReference>
<dbReference type="Pfam" id="PF01245">
    <property type="entry name" value="Ribosomal_L19"/>
    <property type="match status" value="1"/>
</dbReference>
<dbReference type="PIRSF" id="PIRSF002191">
    <property type="entry name" value="Ribosomal_L19"/>
    <property type="match status" value="1"/>
</dbReference>
<dbReference type="PRINTS" id="PR00061">
    <property type="entry name" value="RIBOSOMALL19"/>
</dbReference>
<dbReference type="SUPFAM" id="SSF50104">
    <property type="entry name" value="Translation proteins SH3-like domain"/>
    <property type="match status" value="1"/>
</dbReference>
<dbReference type="PROSITE" id="PS01015">
    <property type="entry name" value="RIBOSOMAL_L19"/>
    <property type="match status" value="1"/>
</dbReference>
<comment type="function">
    <text evidence="1">This protein is located at the 30S-50S ribosomal subunit interface and may play a role in the structure and function of the aminoacyl-tRNA binding site.</text>
</comment>
<comment type="similarity">
    <text evidence="1">Belongs to the bacterial ribosomal protein bL19 family.</text>
</comment>
<gene>
    <name evidence="1" type="primary">rplS</name>
    <name type="ordered locus">Mmcs_1970</name>
</gene>